<name>XPT_LIMF3</name>
<proteinExistence type="inferred from homology"/>
<organism>
    <name type="scientific">Limosilactobacillus fermentum (strain NBRC 3956 / LMG 18251)</name>
    <name type="common">Lactobacillus fermentum</name>
    <dbReference type="NCBI Taxonomy" id="334390"/>
    <lineage>
        <taxon>Bacteria</taxon>
        <taxon>Bacillati</taxon>
        <taxon>Bacillota</taxon>
        <taxon>Bacilli</taxon>
        <taxon>Lactobacillales</taxon>
        <taxon>Lactobacillaceae</taxon>
        <taxon>Limosilactobacillus</taxon>
    </lineage>
</organism>
<evidence type="ECO:0000255" key="1">
    <source>
        <dbReference type="HAMAP-Rule" id="MF_01184"/>
    </source>
</evidence>
<protein>
    <recommendedName>
        <fullName evidence="1">Xanthine phosphoribosyltransferase</fullName>
        <shortName evidence="1">XPRTase</shortName>
        <ecNumber evidence="1">2.4.2.22</ecNumber>
    </recommendedName>
</protein>
<reference key="1">
    <citation type="journal article" date="2008" name="DNA Res.">
        <title>Comparative genome analysis of Lactobacillus reuteri and Lactobacillus fermentum reveal a genomic island for reuterin and cobalamin production.</title>
        <authorList>
            <person name="Morita H."/>
            <person name="Toh H."/>
            <person name="Fukuda S."/>
            <person name="Horikawa H."/>
            <person name="Oshima K."/>
            <person name="Suzuki T."/>
            <person name="Murakami M."/>
            <person name="Hisamatsu S."/>
            <person name="Kato Y."/>
            <person name="Takizawa T."/>
            <person name="Fukuoka H."/>
            <person name="Yoshimura T."/>
            <person name="Itoh K."/>
            <person name="O'Sullivan D.J."/>
            <person name="McKay L.L."/>
            <person name="Ohno H."/>
            <person name="Kikuchi J."/>
            <person name="Masaoka T."/>
            <person name="Hattori M."/>
        </authorList>
    </citation>
    <scope>NUCLEOTIDE SEQUENCE [LARGE SCALE GENOMIC DNA]</scope>
    <source>
        <strain>NBRC 3956 / LMG 18251</strain>
    </source>
</reference>
<dbReference type="EC" id="2.4.2.22" evidence="1"/>
<dbReference type="EMBL" id="AP008937">
    <property type="protein sequence ID" value="BAG27814.1"/>
    <property type="molecule type" value="Genomic_DNA"/>
</dbReference>
<dbReference type="RefSeq" id="WP_012391584.1">
    <property type="nucleotide sequence ID" value="NC_010610.1"/>
</dbReference>
<dbReference type="SMR" id="B2GDT2"/>
<dbReference type="KEGG" id="lfe:LAF_1478"/>
<dbReference type="PATRIC" id="fig|334390.5.peg.1624"/>
<dbReference type="eggNOG" id="COG0503">
    <property type="taxonomic scope" value="Bacteria"/>
</dbReference>
<dbReference type="HOGENOM" id="CLU_099015_0_0_9"/>
<dbReference type="UniPathway" id="UPA00602">
    <property type="reaction ID" value="UER00658"/>
</dbReference>
<dbReference type="Proteomes" id="UP000001697">
    <property type="component" value="Chromosome"/>
</dbReference>
<dbReference type="GO" id="GO:0005737">
    <property type="term" value="C:cytoplasm"/>
    <property type="evidence" value="ECO:0007669"/>
    <property type="project" value="UniProtKB-SubCell"/>
</dbReference>
<dbReference type="GO" id="GO:0000310">
    <property type="term" value="F:xanthine phosphoribosyltransferase activity"/>
    <property type="evidence" value="ECO:0007669"/>
    <property type="project" value="UniProtKB-UniRule"/>
</dbReference>
<dbReference type="GO" id="GO:0006166">
    <property type="term" value="P:purine ribonucleoside salvage"/>
    <property type="evidence" value="ECO:0007669"/>
    <property type="project" value="UniProtKB-KW"/>
</dbReference>
<dbReference type="GO" id="GO:0046110">
    <property type="term" value="P:xanthine metabolic process"/>
    <property type="evidence" value="ECO:0007669"/>
    <property type="project" value="InterPro"/>
</dbReference>
<dbReference type="GO" id="GO:0032265">
    <property type="term" value="P:XMP salvage"/>
    <property type="evidence" value="ECO:0007669"/>
    <property type="project" value="UniProtKB-UniRule"/>
</dbReference>
<dbReference type="CDD" id="cd06223">
    <property type="entry name" value="PRTases_typeI"/>
    <property type="match status" value="1"/>
</dbReference>
<dbReference type="Gene3D" id="3.40.50.2020">
    <property type="match status" value="1"/>
</dbReference>
<dbReference type="HAMAP" id="MF_01184">
    <property type="entry name" value="XPRTase"/>
    <property type="match status" value="1"/>
</dbReference>
<dbReference type="InterPro" id="IPR000836">
    <property type="entry name" value="PRibTrfase_dom"/>
</dbReference>
<dbReference type="InterPro" id="IPR029057">
    <property type="entry name" value="PRTase-like"/>
</dbReference>
<dbReference type="InterPro" id="IPR050118">
    <property type="entry name" value="Pur/Pyrimidine_PRTase"/>
</dbReference>
<dbReference type="InterPro" id="IPR010079">
    <property type="entry name" value="Xanthine_PRibTrfase"/>
</dbReference>
<dbReference type="NCBIfam" id="NF006671">
    <property type="entry name" value="PRK09219.1"/>
    <property type="match status" value="1"/>
</dbReference>
<dbReference type="NCBIfam" id="TIGR01744">
    <property type="entry name" value="XPRTase"/>
    <property type="match status" value="1"/>
</dbReference>
<dbReference type="PANTHER" id="PTHR43864">
    <property type="entry name" value="HYPOXANTHINE/GUANINE PHOSPHORIBOSYLTRANSFERASE"/>
    <property type="match status" value="1"/>
</dbReference>
<dbReference type="PANTHER" id="PTHR43864:SF1">
    <property type="entry name" value="XANTHINE PHOSPHORIBOSYLTRANSFERASE"/>
    <property type="match status" value="1"/>
</dbReference>
<dbReference type="SUPFAM" id="SSF53271">
    <property type="entry name" value="PRTase-like"/>
    <property type="match status" value="1"/>
</dbReference>
<gene>
    <name evidence="1" type="primary">xpt</name>
    <name type="ordered locus">LAF_1478</name>
</gene>
<accession>B2GDT2</accession>
<sequence>MKELEEKIRQFGTVLPGNVLKVDAFLNHQVDPVLMQHIGQEFAARFKDAKITKVWTVESSGIAPAVMTGLALGVPVIFARKHKSLTLNSGMYTADVYSYTKKTTNRISISKRYVDKTDRVLLIDDFLANGQAVEGMLQIADQAGVEVVGAGIVIEKCFQPGSAELAAKGVRVESLAKVSSLADGQVSFKQTEGED</sequence>
<comment type="function">
    <text evidence="1">Converts the preformed base xanthine, a product of nucleic acid breakdown, to xanthosine 5'-monophosphate (XMP), so it can be reused for RNA or DNA synthesis.</text>
</comment>
<comment type="catalytic activity">
    <reaction evidence="1">
        <text>XMP + diphosphate = xanthine + 5-phospho-alpha-D-ribose 1-diphosphate</text>
        <dbReference type="Rhea" id="RHEA:10800"/>
        <dbReference type="ChEBI" id="CHEBI:17712"/>
        <dbReference type="ChEBI" id="CHEBI:33019"/>
        <dbReference type="ChEBI" id="CHEBI:57464"/>
        <dbReference type="ChEBI" id="CHEBI:58017"/>
        <dbReference type="EC" id="2.4.2.22"/>
    </reaction>
</comment>
<comment type="pathway">
    <text evidence="1">Purine metabolism; XMP biosynthesis via salvage pathway; XMP from xanthine: step 1/1.</text>
</comment>
<comment type="subunit">
    <text evidence="1">Homodimer.</text>
</comment>
<comment type="subcellular location">
    <subcellularLocation>
        <location evidence="1">Cytoplasm</location>
    </subcellularLocation>
</comment>
<comment type="similarity">
    <text evidence="1">Belongs to the purine/pyrimidine phosphoribosyltransferase family. Xpt subfamily.</text>
</comment>
<feature type="chain" id="PRO_1000138239" description="Xanthine phosphoribosyltransferase">
    <location>
        <begin position="1"/>
        <end position="195"/>
    </location>
</feature>
<feature type="binding site" evidence="1">
    <location>
        <position position="20"/>
    </location>
    <ligand>
        <name>xanthine</name>
        <dbReference type="ChEBI" id="CHEBI:17712"/>
    </ligand>
</feature>
<feature type="binding site" evidence="1">
    <location>
        <position position="27"/>
    </location>
    <ligand>
        <name>xanthine</name>
        <dbReference type="ChEBI" id="CHEBI:17712"/>
    </ligand>
</feature>
<feature type="binding site" evidence="1">
    <location>
        <begin position="128"/>
        <end position="132"/>
    </location>
    <ligand>
        <name>5-phospho-alpha-D-ribose 1-diphosphate</name>
        <dbReference type="ChEBI" id="CHEBI:58017"/>
    </ligand>
</feature>
<feature type="binding site" evidence="1">
    <location>
        <position position="156"/>
    </location>
    <ligand>
        <name>xanthine</name>
        <dbReference type="ChEBI" id="CHEBI:17712"/>
    </ligand>
</feature>
<keyword id="KW-0963">Cytoplasm</keyword>
<keyword id="KW-0328">Glycosyltransferase</keyword>
<keyword id="KW-0660">Purine salvage</keyword>
<keyword id="KW-1185">Reference proteome</keyword>
<keyword id="KW-0808">Transferase</keyword>